<feature type="chain" id="PRO_0000163121" description="DNA-directed RNA polymerase subunit epsilon">
    <location>
        <begin position="1"/>
        <end position="69"/>
    </location>
</feature>
<feature type="mutagenesis site" description="No change in subcellular localization." evidence="5">
    <original>R</original>
    <variation>A</variation>
    <location>
        <position position="34"/>
    </location>
</feature>
<feature type="mutagenesis site" description="No longer localizes to the nucleoid." evidence="5">
    <original>KFNIEFITPV</original>
    <variation>AAAAAAAAAA</variation>
    <location>
        <begin position="41"/>
        <end position="50"/>
    </location>
</feature>
<feature type="mutagenesis site" description="No change in subcellular localization." evidence="5">
    <original>FIT</original>
    <variation>AAA</variation>
    <location>
        <begin position="46"/>
        <end position="48"/>
    </location>
</feature>
<feature type="mutagenesis site" description="No change in subcellular localization." evidence="5">
    <original>SENFKVLEL</original>
    <variation>AAAAAAAAA</variation>
    <location>
        <begin position="61"/>
        <end position="69"/>
    </location>
</feature>
<feature type="strand" evidence="11">
    <location>
        <begin position="2"/>
        <end position="9"/>
    </location>
</feature>
<feature type="strand" evidence="11">
    <location>
        <begin position="11"/>
        <end position="13"/>
    </location>
</feature>
<feature type="helix" evidence="11">
    <location>
        <begin position="17"/>
        <end position="19"/>
    </location>
</feature>
<feature type="strand" evidence="11">
    <location>
        <begin position="21"/>
        <end position="26"/>
    </location>
</feature>
<feature type="helix" evidence="11">
    <location>
        <begin position="30"/>
        <end position="37"/>
    </location>
</feature>
<feature type="strand" evidence="12">
    <location>
        <begin position="38"/>
        <end position="40"/>
    </location>
</feature>
<feature type="strand" evidence="11">
    <location>
        <begin position="43"/>
        <end position="50"/>
    </location>
</feature>
<feature type="helix" evidence="11">
    <location>
        <begin position="52"/>
        <end position="60"/>
    </location>
</feature>
<feature type="strand" evidence="12">
    <location>
        <begin position="61"/>
        <end position="63"/>
    </location>
</feature>
<gene>
    <name evidence="2 8" type="primary">rpoY</name>
    <name type="synonym">ykzG</name>
    <name type="ordered locus">BSU14540</name>
</gene>
<name>RPOY_BACSU</name>
<dbReference type="EC" id="2.7.7.6" evidence="2 6"/>
<dbReference type="EMBL" id="AL009126">
    <property type="protein sequence ID" value="CAB13327.1"/>
    <property type="molecule type" value="Genomic_DNA"/>
</dbReference>
<dbReference type="PIR" id="D69871">
    <property type="entry name" value="D69871"/>
</dbReference>
<dbReference type="PDB" id="6WVK">
    <property type="method" value="EM"/>
    <property type="resolution" value="3.36 A"/>
    <property type="chains" value="E=1-69"/>
</dbReference>
<dbReference type="PDB" id="6ZCA">
    <property type="method" value="EM"/>
    <property type="resolution" value="4.20 A"/>
    <property type="chains" value="E=1-69"/>
</dbReference>
<dbReference type="PDB" id="6ZFB">
    <property type="method" value="EM"/>
    <property type="resolution" value="3.90 A"/>
    <property type="chains" value="E/e=1-69"/>
</dbReference>
<dbReference type="PDB" id="7CKQ">
    <property type="method" value="EM"/>
    <property type="resolution" value="4.40 A"/>
    <property type="chains" value="H=1-69"/>
</dbReference>
<dbReference type="PDB" id="7F75">
    <property type="method" value="EM"/>
    <property type="resolution" value="4.20 A"/>
    <property type="chains" value="H=1-69"/>
</dbReference>
<dbReference type="PDB" id="8XA6">
    <property type="method" value="EM"/>
    <property type="resolution" value="3.02 A"/>
    <property type="chains" value="E=1-69"/>
</dbReference>
<dbReference type="PDB" id="8XA7">
    <property type="method" value="EM"/>
    <property type="resolution" value="2.94 A"/>
    <property type="chains" value="E=1-69"/>
</dbReference>
<dbReference type="PDB" id="8XA8">
    <property type="method" value="EM"/>
    <property type="resolution" value="3.19 A"/>
    <property type="chains" value="E=1-69"/>
</dbReference>
<dbReference type="PDBsum" id="6WVK"/>
<dbReference type="PDBsum" id="6ZCA"/>
<dbReference type="PDBsum" id="6ZFB"/>
<dbReference type="PDBsum" id="7CKQ"/>
<dbReference type="PDBsum" id="7F75"/>
<dbReference type="PDBsum" id="8XA6"/>
<dbReference type="PDBsum" id="8XA7"/>
<dbReference type="PDBsum" id="8XA8"/>
<dbReference type="EMDB" id="EMD-21921"/>
<dbReference type="EMDB" id="EMD-30390"/>
<dbReference type="EMDB" id="EMD-31485"/>
<dbReference type="EMDB" id="EMD-38195"/>
<dbReference type="EMDB" id="EMD-38196"/>
<dbReference type="SMR" id="O31718"/>
<dbReference type="FunCoup" id="O31718">
    <property type="interactions" value="35"/>
</dbReference>
<dbReference type="STRING" id="224308.BSU14540"/>
<dbReference type="jPOST" id="O31718"/>
<dbReference type="PaxDb" id="224308-BSU14540"/>
<dbReference type="EnsemblBacteria" id="CAB13327">
    <property type="protein sequence ID" value="CAB13327"/>
    <property type="gene ID" value="BSU_14540"/>
</dbReference>
<dbReference type="GeneID" id="939482"/>
<dbReference type="KEGG" id="bsu:BSU14540"/>
<dbReference type="PATRIC" id="fig|224308.179.peg.1584"/>
<dbReference type="eggNOG" id="COG5503">
    <property type="taxonomic scope" value="Bacteria"/>
</dbReference>
<dbReference type="InParanoid" id="O31718"/>
<dbReference type="OrthoDB" id="2147503at2"/>
<dbReference type="PhylomeDB" id="O31718"/>
<dbReference type="BioCyc" id="BSUB:BSU14540-MONOMER"/>
<dbReference type="Proteomes" id="UP000001570">
    <property type="component" value="Chromosome"/>
</dbReference>
<dbReference type="GO" id="GO:0005737">
    <property type="term" value="C:cytoplasm"/>
    <property type="evidence" value="ECO:0007669"/>
    <property type="project" value="UniProtKB-KW"/>
</dbReference>
<dbReference type="GO" id="GO:0000428">
    <property type="term" value="C:DNA-directed RNA polymerase complex"/>
    <property type="evidence" value="ECO:0007669"/>
    <property type="project" value="UniProtKB-KW"/>
</dbReference>
<dbReference type="GO" id="GO:0009295">
    <property type="term" value="C:nucleoid"/>
    <property type="evidence" value="ECO:0007669"/>
    <property type="project" value="UniProtKB-SubCell"/>
</dbReference>
<dbReference type="GO" id="GO:0003677">
    <property type="term" value="F:DNA binding"/>
    <property type="evidence" value="ECO:0007669"/>
    <property type="project" value="UniProtKB-UniRule"/>
</dbReference>
<dbReference type="GO" id="GO:0003899">
    <property type="term" value="F:DNA-directed RNA polymerase activity"/>
    <property type="evidence" value="ECO:0007669"/>
    <property type="project" value="UniProtKB-UniRule"/>
</dbReference>
<dbReference type="GO" id="GO:0006351">
    <property type="term" value="P:DNA-templated transcription"/>
    <property type="evidence" value="ECO:0007669"/>
    <property type="project" value="UniProtKB-UniRule"/>
</dbReference>
<dbReference type="Gene3D" id="3.10.20.730">
    <property type="entry name" value="RNAP, epsilon subunit-like"/>
    <property type="match status" value="1"/>
</dbReference>
<dbReference type="HAMAP" id="MF_01553">
    <property type="entry name" value="RNApol_bact_RpoY"/>
    <property type="match status" value="1"/>
</dbReference>
<dbReference type="InterPro" id="IPR009907">
    <property type="entry name" value="RpoY"/>
</dbReference>
<dbReference type="NCBIfam" id="NF010188">
    <property type="entry name" value="PRK13667.1"/>
    <property type="match status" value="1"/>
</dbReference>
<dbReference type="Pfam" id="PF07288">
    <property type="entry name" value="RpoY"/>
    <property type="match status" value="1"/>
</dbReference>
<sequence length="69" mass="8252">MIYKVFYQEKADEVPVREKTDSLYIEGVSERDVRTKLKEKKFNIEFITPVDGAFLEYEQQSENFKVLEL</sequence>
<evidence type="ECO:0000250" key="1">
    <source>
        <dbReference type="UniProtKB" id="A0A0K2H5X8"/>
    </source>
</evidence>
<evidence type="ECO:0000255" key="2">
    <source>
        <dbReference type="HAMAP-Rule" id="MF_01553"/>
    </source>
</evidence>
<evidence type="ECO:0000269" key="3">
    <source>
    </source>
</evidence>
<evidence type="ECO:0000269" key="4">
    <source>
    </source>
</evidence>
<evidence type="ECO:0000269" key="5">
    <source>
    </source>
</evidence>
<evidence type="ECO:0000269" key="6">
    <source>
    </source>
</evidence>
<evidence type="ECO:0000303" key="7">
    <source>
    </source>
</evidence>
<evidence type="ECO:0000303" key="8">
    <source>
    </source>
</evidence>
<evidence type="ECO:0000303" key="9">
    <source>
    </source>
</evidence>
<evidence type="ECO:0000305" key="10"/>
<evidence type="ECO:0007829" key="11">
    <source>
        <dbReference type="PDB" id="8XA7"/>
    </source>
</evidence>
<evidence type="ECO:0007829" key="12">
    <source>
        <dbReference type="PDB" id="8XA8"/>
    </source>
</evidence>
<comment type="function">
    <text evidence="3 4 5 6">A non-essential component of RNA polymerase (RNAP) (PubMed:18289874, PubMed:21710567, PubMed:25092033, PubMed:6802805). Has a similar structure to bacteriophage T7 protein Gp2 (AC P03704), which is known to bind to RNAP in the DNA binding-cleft. Unlike Gp2 however, this protein does not inhibit transcription initiation (PubMed:25092033). In vitro reconstitution experiments show this subunit is dispensible (PubMed:18289874).</text>
</comment>
<comment type="catalytic activity">
    <reaction evidence="2">
        <text>RNA(n) + a ribonucleoside 5'-triphosphate = RNA(n+1) + diphosphate</text>
        <dbReference type="Rhea" id="RHEA:21248"/>
        <dbReference type="Rhea" id="RHEA-COMP:14527"/>
        <dbReference type="Rhea" id="RHEA-COMP:17342"/>
        <dbReference type="ChEBI" id="CHEBI:33019"/>
        <dbReference type="ChEBI" id="CHEBI:61557"/>
        <dbReference type="ChEBI" id="CHEBI:140395"/>
        <dbReference type="EC" id="2.7.7.6"/>
    </reaction>
</comment>
<comment type="subunit">
    <text evidence="1 3 4 5 6">Monomer (By similarity). RNAP is composed of a core of 2 alpha, a beta and a beta' subunit. The core is associated with a delta subunit, and at least one of epsilon or omega (PubMed:18289874, PubMed:21710567, PubMed:25092033, PubMed:6802805). When a sigma factor is associated with the core the holoenzyme is formed, which can initiate transcription (PubMed:18289874).</text>
</comment>
<comment type="subcellular location">
    <subcellularLocation>
        <location evidence="5">Cytoplasm</location>
        <location evidence="5">Nucleoid</location>
    </subcellularLocation>
    <text evidence="5">Colocalizes with RNAP.</text>
</comment>
<comment type="induction">
    <text evidence="5">Part of the rpoY-rnjA operon, transcribed constitutively.</text>
</comment>
<comment type="disruption phenotype">
    <text evidence="5">No visible phenotype; growth, bacterial fitness in competition experiments, RNAP distribution, global transcript levels and transcription initiation in vitro are all unaffected.</text>
</comment>
<comment type="similarity">
    <text evidence="2">Belongs to the RNA polymerase subunit epsilon family.</text>
</comment>
<reference key="1">
    <citation type="journal article" date="1997" name="Nature">
        <title>The complete genome sequence of the Gram-positive bacterium Bacillus subtilis.</title>
        <authorList>
            <person name="Kunst F."/>
            <person name="Ogasawara N."/>
            <person name="Moszer I."/>
            <person name="Albertini A.M."/>
            <person name="Alloni G."/>
            <person name="Azevedo V."/>
            <person name="Bertero M.G."/>
            <person name="Bessieres P."/>
            <person name="Bolotin A."/>
            <person name="Borchert S."/>
            <person name="Borriss R."/>
            <person name="Boursier L."/>
            <person name="Brans A."/>
            <person name="Braun M."/>
            <person name="Brignell S.C."/>
            <person name="Bron S."/>
            <person name="Brouillet S."/>
            <person name="Bruschi C.V."/>
            <person name="Caldwell B."/>
            <person name="Capuano V."/>
            <person name="Carter N.M."/>
            <person name="Choi S.-K."/>
            <person name="Codani J.-J."/>
            <person name="Connerton I.F."/>
            <person name="Cummings N.J."/>
            <person name="Daniel R.A."/>
            <person name="Denizot F."/>
            <person name="Devine K.M."/>
            <person name="Duesterhoeft A."/>
            <person name="Ehrlich S.D."/>
            <person name="Emmerson P.T."/>
            <person name="Entian K.-D."/>
            <person name="Errington J."/>
            <person name="Fabret C."/>
            <person name="Ferrari E."/>
            <person name="Foulger D."/>
            <person name="Fritz C."/>
            <person name="Fujita M."/>
            <person name="Fujita Y."/>
            <person name="Fuma S."/>
            <person name="Galizzi A."/>
            <person name="Galleron N."/>
            <person name="Ghim S.-Y."/>
            <person name="Glaser P."/>
            <person name="Goffeau A."/>
            <person name="Golightly E.J."/>
            <person name="Grandi G."/>
            <person name="Guiseppi G."/>
            <person name="Guy B.J."/>
            <person name="Haga K."/>
            <person name="Haiech J."/>
            <person name="Harwood C.R."/>
            <person name="Henaut A."/>
            <person name="Hilbert H."/>
            <person name="Holsappel S."/>
            <person name="Hosono S."/>
            <person name="Hullo M.-F."/>
            <person name="Itaya M."/>
            <person name="Jones L.-M."/>
            <person name="Joris B."/>
            <person name="Karamata D."/>
            <person name="Kasahara Y."/>
            <person name="Klaerr-Blanchard M."/>
            <person name="Klein C."/>
            <person name="Kobayashi Y."/>
            <person name="Koetter P."/>
            <person name="Koningstein G."/>
            <person name="Krogh S."/>
            <person name="Kumano M."/>
            <person name="Kurita K."/>
            <person name="Lapidus A."/>
            <person name="Lardinois S."/>
            <person name="Lauber J."/>
            <person name="Lazarevic V."/>
            <person name="Lee S.-M."/>
            <person name="Levine A."/>
            <person name="Liu H."/>
            <person name="Masuda S."/>
            <person name="Mauel C."/>
            <person name="Medigue C."/>
            <person name="Medina N."/>
            <person name="Mellado R.P."/>
            <person name="Mizuno M."/>
            <person name="Moestl D."/>
            <person name="Nakai S."/>
            <person name="Noback M."/>
            <person name="Noone D."/>
            <person name="O'Reilly M."/>
            <person name="Ogawa K."/>
            <person name="Ogiwara A."/>
            <person name="Oudega B."/>
            <person name="Park S.-H."/>
            <person name="Parro V."/>
            <person name="Pohl T.M."/>
            <person name="Portetelle D."/>
            <person name="Porwollik S."/>
            <person name="Prescott A.M."/>
            <person name="Presecan E."/>
            <person name="Pujic P."/>
            <person name="Purnelle B."/>
            <person name="Rapoport G."/>
            <person name="Rey M."/>
            <person name="Reynolds S."/>
            <person name="Rieger M."/>
            <person name="Rivolta C."/>
            <person name="Rocha E."/>
            <person name="Roche B."/>
            <person name="Rose M."/>
            <person name="Sadaie Y."/>
            <person name="Sato T."/>
            <person name="Scanlan E."/>
            <person name="Schleich S."/>
            <person name="Schroeter R."/>
            <person name="Scoffone F."/>
            <person name="Sekiguchi J."/>
            <person name="Sekowska A."/>
            <person name="Seror S.J."/>
            <person name="Serror P."/>
            <person name="Shin B.-S."/>
            <person name="Soldo B."/>
            <person name="Sorokin A."/>
            <person name="Tacconi E."/>
            <person name="Takagi T."/>
            <person name="Takahashi H."/>
            <person name="Takemaru K."/>
            <person name="Takeuchi M."/>
            <person name="Tamakoshi A."/>
            <person name="Tanaka T."/>
            <person name="Terpstra P."/>
            <person name="Tognoni A."/>
            <person name="Tosato V."/>
            <person name="Uchiyama S."/>
            <person name="Vandenbol M."/>
            <person name="Vannier F."/>
            <person name="Vassarotti A."/>
            <person name="Viari A."/>
            <person name="Wambutt R."/>
            <person name="Wedler E."/>
            <person name="Wedler H."/>
            <person name="Weitzenegger T."/>
            <person name="Winters P."/>
            <person name="Wipat A."/>
            <person name="Yamamoto H."/>
            <person name="Yamane K."/>
            <person name="Yasumoto K."/>
            <person name="Yata K."/>
            <person name="Yoshida K."/>
            <person name="Yoshikawa H.-F."/>
            <person name="Zumstein E."/>
            <person name="Yoshikawa H."/>
            <person name="Danchin A."/>
        </authorList>
    </citation>
    <scope>NUCLEOTIDE SEQUENCE [LARGE SCALE GENOMIC DNA]</scope>
    <source>
        <strain>168</strain>
    </source>
</reference>
<reference key="2">
    <citation type="journal article" date="1982" name="J. Bacteriol.">
        <title>Interchangeability of delta subunits of RNA polymerase from different species of the genus Bacillus.</title>
        <authorList>
            <person name="Achberger E.C."/>
            <person name="Tahara M."/>
            <person name="Whiteley H.R."/>
        </authorList>
    </citation>
    <scope>SUBUNIT</scope>
    <source>
        <strain>168</strain>
    </source>
</reference>
<reference key="3">
    <citation type="journal article" date="2008" name="Protein Expr. Purif.">
        <title>Overproduction and purification of recombinant Bacillus subtilis RNA polymerase.</title>
        <authorList>
            <person name="Yang X."/>
            <person name="Lewis P.J."/>
        </authorList>
    </citation>
    <scope>SUBUNIT</scope>
    <scope>IDENTIFICATION</scope>
    <source>
        <strain>BS200</strain>
    </source>
</reference>
<reference key="4">
    <citation type="journal article" date="2011" name="Proteomics">
        <title>The dynamic protein partnership of RNA polymerase in Bacillus subtilis.</title>
        <authorList>
            <person name="Delumeau O."/>
            <person name="Lecointe F."/>
            <person name="Muntel J."/>
            <person name="Guillot A."/>
            <person name="Guedon E."/>
            <person name="Monnet V."/>
            <person name="Hecker M."/>
            <person name="Becher D."/>
            <person name="Polard P."/>
            <person name="Noirot P."/>
        </authorList>
    </citation>
    <scope>SUBUNIT</scope>
    <source>
        <strain>168</strain>
    </source>
</reference>
<reference key="5">
    <citation type="journal article" date="2014" name="J. Bacteriol.">
        <title>epsilon, a new subunit of RNA polymerase found in gram-positive bacteria.</title>
        <authorList>
            <person name="Keller A.N."/>
            <person name="Yang X."/>
            <person name="Wiedermannova J."/>
            <person name="Delumeau O."/>
            <person name="Krasny L."/>
            <person name="Lewis P.J."/>
        </authorList>
    </citation>
    <scope>FUNCTION</scope>
    <scope>SUBUNIT</scope>
    <scope>SUBCELLULAR LOCATION</scope>
    <scope>INDUCTION</scope>
    <scope>DISRUPTION PHENOTYPE</scope>
    <scope>MUTAGENESIS OF ARG-34; 41-LYS--VAL-50; 46-PHE--THR-48 AND 61-SER--LEU-69</scope>
    <source>
        <strain>168 / BSB1</strain>
    </source>
</reference>
<proteinExistence type="evidence at protein level"/>
<keyword id="KW-0002">3D-structure</keyword>
<keyword id="KW-0963">Cytoplasm</keyword>
<keyword id="KW-0240">DNA-directed RNA polymerase</keyword>
<keyword id="KW-0548">Nucleotidyltransferase</keyword>
<keyword id="KW-1185">Reference proteome</keyword>
<keyword id="KW-0804">Transcription</keyword>
<keyword id="KW-0808">Transferase</keyword>
<protein>
    <recommendedName>
        <fullName evidence="2 8">DNA-directed RNA polymerase subunit epsilon</fullName>
        <shortName evidence="2">RNAP epsilon subunit</shortName>
        <ecNumber evidence="2 6">2.7.7.6</ecNumber>
    </recommendedName>
    <alternativeName>
        <fullName evidence="7">DNA-directed RNA polymerase subunit omega 1</fullName>
    </alternativeName>
    <alternativeName>
        <fullName evidence="2">RNA polymerase epsilon subunit</fullName>
    </alternativeName>
    <alternativeName>
        <fullName evidence="9">RNA polymerase omega 1 subunit</fullName>
    </alternativeName>
    <alternativeName>
        <fullName evidence="2">Transcriptase subunit epsilon</fullName>
    </alternativeName>
    <alternativeName>
        <fullName evidence="10">Transcriptase subunit omega 1</fullName>
    </alternativeName>
</protein>
<organism>
    <name type="scientific">Bacillus subtilis (strain 168)</name>
    <dbReference type="NCBI Taxonomy" id="224308"/>
    <lineage>
        <taxon>Bacteria</taxon>
        <taxon>Bacillati</taxon>
        <taxon>Bacillota</taxon>
        <taxon>Bacilli</taxon>
        <taxon>Bacillales</taxon>
        <taxon>Bacillaceae</taxon>
        <taxon>Bacillus</taxon>
    </lineage>
</organism>
<accession>O31718</accession>